<keyword id="KW-0460">Magnesium</keyword>
<keyword id="KW-0479">Metal-binding</keyword>
<keyword id="KW-0520">NAD</keyword>
<keyword id="KW-0547">Nucleotide-binding</keyword>
<keyword id="KW-0560">Oxidoreductase</keyword>
<gene>
    <name evidence="3" type="primary">ald</name>
    <name evidence="5" type="ordered locus">HELO_3819</name>
</gene>
<sequence length="371" mass="38504">MKIAVPKEIKNHEYRVALTPSGARELVGRGHDVIVQAAAGEGAGFSDADFEAAGARLEADVAKLWDDAELILKVKEPQAEEVARLSAGQTLFTYLHLAAEESLTKGLLDSGATCIAYETITAPEGGLPLLAPMSTVAGRMAVQAGAHSLEKAQGGAGILLPGVPGVAPARVTVIGGGVVGENAARMALGLGAEVTVLDKSIPRLETLDDRYQGRMKTVFSTADALEEAVRESDLIIGAVLVPGAAAPKLITRDMLSDMKPGSVLVDVAIDQGGCFETSKPTTHAEPTYVVDGVVHYCVANMPGAVARTSTQALTNATLPFVVALADKGWQKALADDDHFAAGLNVHDGKLTYRAVAEAFGLEYVEAASLIG</sequence>
<comment type="function">
    <text evidence="2">Catalyzes the reversible reductive amination of pyruvate to L-alanine.</text>
</comment>
<comment type="catalytic activity">
    <reaction evidence="2">
        <text>L-alanine + NAD(+) + H2O = pyruvate + NH4(+) + NADH + H(+)</text>
        <dbReference type="Rhea" id="RHEA:18405"/>
        <dbReference type="ChEBI" id="CHEBI:15361"/>
        <dbReference type="ChEBI" id="CHEBI:15377"/>
        <dbReference type="ChEBI" id="CHEBI:15378"/>
        <dbReference type="ChEBI" id="CHEBI:28938"/>
        <dbReference type="ChEBI" id="CHEBI:57540"/>
        <dbReference type="ChEBI" id="CHEBI:57945"/>
        <dbReference type="ChEBI" id="CHEBI:57972"/>
        <dbReference type="EC" id="1.4.1.1"/>
    </reaction>
</comment>
<comment type="cofactor">
    <cofactor evidence="1">
        <name>Mg(2+)</name>
        <dbReference type="ChEBI" id="CHEBI:18420"/>
    </cofactor>
    <text evidence="1">Binds 1 Mg(2+) ion per subunit.</text>
</comment>
<comment type="pathway">
    <text evidence="1">Amino-acid degradation; L-alanine degradation via dehydrogenase pathway; NH(3) and pyruvate from L-alanine: step 1/1.</text>
</comment>
<comment type="similarity">
    <text evidence="4">Belongs to the AlaDH/PNT family.</text>
</comment>
<name>DHA_HALED</name>
<proteinExistence type="evidence at protein level"/>
<reference key="1">
    <citation type="journal article" date="2011" name="Environ. Microbiol.">
        <title>A blueprint of ectoine metabolism from the genome of the industrial producer Halomonas elongata DSM 2581(T).</title>
        <authorList>
            <person name="Schwibbert K."/>
            <person name="Marin-Sanguino A."/>
            <person name="Bagyan I."/>
            <person name="Heidrich G."/>
            <person name="Lentzen G."/>
            <person name="Seitz H."/>
            <person name="Rampp M."/>
            <person name="Schuster S.C."/>
            <person name="Klenk H.P."/>
            <person name="Pfeiffer F."/>
            <person name="Oesterhelt D."/>
            <person name="Kunte H.J."/>
        </authorList>
    </citation>
    <scope>NUCLEOTIDE SEQUENCE [LARGE SCALE GENOMIC DNA]</scope>
    <source>
        <strain>ATCC 33173 / DSM 2581 / NBRC 15536 / NCIMB 2198 / 1H9</strain>
    </source>
</reference>
<reference key="2">
    <citation type="journal article" date="2017" name="PLoS ONE">
        <title>Osmoregulation in the halophilic bacterium Halomonas elongata: a case study for integrative systems biology.</title>
        <authorList>
            <person name="Kindzierski V."/>
            <person name="Raschke S."/>
            <person name="Knabe N."/>
            <person name="Siedler F."/>
            <person name="Scheffer B."/>
            <person name="Pflueger-Grau K."/>
            <person name="Pfeiffer F."/>
            <person name="Oesterhelt D."/>
            <person name="Marin-Sanguino A."/>
            <person name="Kunte H.J."/>
        </authorList>
    </citation>
    <scope>FUNCTION</scope>
    <scope>CATALYTIC ACTIVITY</scope>
    <source>
        <strain>ATCC 33173 / DSM 2581 / NBRC 15536 / NCIMB 2198 / 1H9</strain>
    </source>
</reference>
<evidence type="ECO:0000250" key="1">
    <source>
        <dbReference type="UniProtKB" id="P9WQB1"/>
    </source>
</evidence>
<evidence type="ECO:0000269" key="2">
    <source>
    </source>
</evidence>
<evidence type="ECO:0000303" key="3">
    <source>
    </source>
</evidence>
<evidence type="ECO:0000305" key="4"/>
<evidence type="ECO:0000312" key="5">
    <source>
        <dbReference type="EMBL" id="CBV43703.1"/>
    </source>
</evidence>
<accession>E1V931</accession>
<protein>
    <recommendedName>
        <fullName evidence="3">Alanine dehydrogenase</fullName>
        <ecNumber evidence="2">1.4.1.1</ecNumber>
    </recommendedName>
</protein>
<feature type="chain" id="PRO_0000439537" description="Alanine dehydrogenase">
    <location>
        <begin position="1"/>
        <end position="371"/>
    </location>
</feature>
<feature type="active site" description="Proton donor/acceptor" evidence="1">
    <location>
        <position position="96"/>
    </location>
</feature>
<feature type="active site" description="Proton donor/acceptor" evidence="1">
    <location>
        <position position="270"/>
    </location>
</feature>
<feature type="binding site" evidence="1">
    <location>
        <position position="15"/>
    </location>
    <ligand>
        <name>substrate</name>
    </ligand>
</feature>
<feature type="binding site" evidence="1">
    <location>
        <position position="75"/>
    </location>
    <ligand>
        <name>substrate</name>
    </ligand>
</feature>
<feature type="binding site" evidence="1">
    <location>
        <position position="134"/>
    </location>
    <ligand>
        <name>NAD(+)</name>
        <dbReference type="ChEBI" id="CHEBI:57540"/>
    </ligand>
</feature>
<feature type="binding site" evidence="1">
    <location>
        <position position="198"/>
    </location>
    <ligand>
        <name>NAD(+)</name>
        <dbReference type="ChEBI" id="CHEBI:57540"/>
    </ligand>
</feature>
<feature type="binding site" evidence="1">
    <location>
        <position position="203"/>
    </location>
    <ligand>
        <name>NAD(+)</name>
        <dbReference type="ChEBI" id="CHEBI:57540"/>
    </ligand>
</feature>
<feature type="binding site" evidence="1">
    <location>
        <position position="220"/>
    </location>
    <ligand>
        <name>NAD(+)</name>
        <dbReference type="ChEBI" id="CHEBI:57540"/>
    </ligand>
</feature>
<feature type="binding site" evidence="1">
    <location>
        <begin position="239"/>
        <end position="240"/>
    </location>
    <ligand>
        <name>NAD(+)</name>
        <dbReference type="ChEBI" id="CHEBI:57540"/>
    </ligand>
</feature>
<feature type="binding site" evidence="1">
    <location>
        <begin position="267"/>
        <end position="270"/>
    </location>
    <ligand>
        <name>NAD(+)</name>
        <dbReference type="ChEBI" id="CHEBI:57540"/>
    </ligand>
</feature>
<feature type="binding site" evidence="1">
    <location>
        <position position="279"/>
    </location>
    <ligand>
        <name>NAD(+)</name>
        <dbReference type="ChEBI" id="CHEBI:57540"/>
    </ligand>
</feature>
<feature type="binding site" evidence="1">
    <location>
        <begin position="298"/>
        <end position="301"/>
    </location>
    <ligand>
        <name>NAD(+)</name>
        <dbReference type="ChEBI" id="CHEBI:57540"/>
    </ligand>
</feature>
<organism>
    <name type="scientific">Halomonas elongata (strain ATCC 33173 / DSM 2581 / NBRC 15536 / NCIMB 2198 / 1H9)</name>
    <dbReference type="NCBI Taxonomy" id="768066"/>
    <lineage>
        <taxon>Bacteria</taxon>
        <taxon>Pseudomonadati</taxon>
        <taxon>Pseudomonadota</taxon>
        <taxon>Gammaproteobacteria</taxon>
        <taxon>Oceanospirillales</taxon>
        <taxon>Halomonadaceae</taxon>
        <taxon>Halomonas</taxon>
    </lineage>
</organism>
<dbReference type="EC" id="1.4.1.1" evidence="2"/>
<dbReference type="EMBL" id="FN869568">
    <property type="protein sequence ID" value="CBV43703.1"/>
    <property type="molecule type" value="Genomic_DNA"/>
</dbReference>
<dbReference type="RefSeq" id="WP_013333575.1">
    <property type="nucleotide sequence ID" value="NC_014532.2"/>
</dbReference>
<dbReference type="SMR" id="E1V931"/>
<dbReference type="STRING" id="768066.HELO_3819"/>
<dbReference type="GeneID" id="91011219"/>
<dbReference type="KEGG" id="hel:HELO_3819"/>
<dbReference type="eggNOG" id="COG0686">
    <property type="taxonomic scope" value="Bacteria"/>
</dbReference>
<dbReference type="HOGENOM" id="CLU_003376_3_0_6"/>
<dbReference type="OrthoDB" id="9804592at2"/>
<dbReference type="UniPathway" id="UPA00527">
    <property type="reaction ID" value="UER00585"/>
</dbReference>
<dbReference type="Proteomes" id="UP000008707">
    <property type="component" value="Chromosome"/>
</dbReference>
<dbReference type="GO" id="GO:0005886">
    <property type="term" value="C:plasma membrane"/>
    <property type="evidence" value="ECO:0007669"/>
    <property type="project" value="TreeGrafter"/>
</dbReference>
<dbReference type="GO" id="GO:0000286">
    <property type="term" value="F:alanine dehydrogenase activity"/>
    <property type="evidence" value="ECO:0007669"/>
    <property type="project" value="UniProtKB-EC"/>
</dbReference>
<dbReference type="GO" id="GO:0046872">
    <property type="term" value="F:metal ion binding"/>
    <property type="evidence" value="ECO:0007669"/>
    <property type="project" value="UniProtKB-KW"/>
</dbReference>
<dbReference type="GO" id="GO:0000166">
    <property type="term" value="F:nucleotide binding"/>
    <property type="evidence" value="ECO:0007669"/>
    <property type="project" value="UniProtKB-KW"/>
</dbReference>
<dbReference type="GO" id="GO:0042853">
    <property type="term" value="P:L-alanine catabolic process"/>
    <property type="evidence" value="ECO:0007669"/>
    <property type="project" value="UniProtKB-UniPathway"/>
</dbReference>
<dbReference type="CDD" id="cd05305">
    <property type="entry name" value="L-AlaDH"/>
    <property type="match status" value="1"/>
</dbReference>
<dbReference type="FunFam" id="3.40.50.720:FF:000049">
    <property type="entry name" value="Alanine dehydrogenase"/>
    <property type="match status" value="1"/>
</dbReference>
<dbReference type="Gene3D" id="3.40.50.720">
    <property type="entry name" value="NAD(P)-binding Rossmann-like Domain"/>
    <property type="match status" value="2"/>
</dbReference>
<dbReference type="InterPro" id="IPR008141">
    <property type="entry name" value="Ala_DH"/>
</dbReference>
<dbReference type="InterPro" id="IPR008143">
    <property type="entry name" value="Ala_DH/PNT_CS2"/>
</dbReference>
<dbReference type="InterPro" id="IPR007886">
    <property type="entry name" value="AlaDH/PNT_N"/>
</dbReference>
<dbReference type="InterPro" id="IPR007698">
    <property type="entry name" value="AlaDH/PNT_NAD(H)-bd"/>
</dbReference>
<dbReference type="InterPro" id="IPR036291">
    <property type="entry name" value="NAD(P)-bd_dom_sf"/>
</dbReference>
<dbReference type="NCBIfam" id="TIGR00518">
    <property type="entry name" value="alaDH"/>
    <property type="match status" value="1"/>
</dbReference>
<dbReference type="PANTHER" id="PTHR42795">
    <property type="entry name" value="ALANINE DEHYDROGENASE"/>
    <property type="match status" value="1"/>
</dbReference>
<dbReference type="PANTHER" id="PTHR42795:SF1">
    <property type="entry name" value="ALANINE DEHYDROGENASE"/>
    <property type="match status" value="1"/>
</dbReference>
<dbReference type="Pfam" id="PF01262">
    <property type="entry name" value="AlaDh_PNT_C"/>
    <property type="match status" value="1"/>
</dbReference>
<dbReference type="Pfam" id="PF05222">
    <property type="entry name" value="AlaDh_PNT_N"/>
    <property type="match status" value="1"/>
</dbReference>
<dbReference type="PIRSF" id="PIRSF000183">
    <property type="entry name" value="Alanine_dh"/>
    <property type="match status" value="1"/>
</dbReference>
<dbReference type="SMART" id="SM01002">
    <property type="entry name" value="AlaDh_PNT_C"/>
    <property type="match status" value="1"/>
</dbReference>
<dbReference type="SMART" id="SM01003">
    <property type="entry name" value="AlaDh_PNT_N"/>
    <property type="match status" value="1"/>
</dbReference>
<dbReference type="SUPFAM" id="SSF52283">
    <property type="entry name" value="Formate/glycerate dehydrogenase catalytic domain-like"/>
    <property type="match status" value="1"/>
</dbReference>
<dbReference type="SUPFAM" id="SSF51735">
    <property type="entry name" value="NAD(P)-binding Rossmann-fold domains"/>
    <property type="match status" value="1"/>
</dbReference>
<dbReference type="PROSITE" id="PS00837">
    <property type="entry name" value="ALADH_PNT_2"/>
    <property type="match status" value="1"/>
</dbReference>